<keyword id="KW-1185">Reference proteome</keyword>
<keyword id="KW-0687">Ribonucleoprotein</keyword>
<keyword id="KW-0689">Ribosomal protein</keyword>
<feature type="chain" id="PRO_1000211697" description="Large ribosomal subunit protein bL35">
    <location>
        <begin position="1"/>
        <end position="65"/>
    </location>
</feature>
<feature type="region of interest" description="Disordered" evidence="2">
    <location>
        <begin position="1"/>
        <end position="49"/>
    </location>
</feature>
<feature type="compositionally biased region" description="Basic residues" evidence="2">
    <location>
        <begin position="1"/>
        <end position="43"/>
    </location>
</feature>
<evidence type="ECO:0000255" key="1">
    <source>
        <dbReference type="HAMAP-Rule" id="MF_00514"/>
    </source>
</evidence>
<evidence type="ECO:0000256" key="2">
    <source>
        <dbReference type="SAM" id="MobiDB-lite"/>
    </source>
</evidence>
<evidence type="ECO:0000305" key="3"/>
<accession>C6BRG9</accession>
<organism>
    <name type="scientific">Maridesulfovibrio salexigens (strain ATCC 14822 / DSM 2638 / NCIMB 8403 / VKM B-1763)</name>
    <name type="common">Desulfovibrio salexigens</name>
    <dbReference type="NCBI Taxonomy" id="526222"/>
    <lineage>
        <taxon>Bacteria</taxon>
        <taxon>Pseudomonadati</taxon>
        <taxon>Thermodesulfobacteriota</taxon>
        <taxon>Desulfovibrionia</taxon>
        <taxon>Desulfovibrionales</taxon>
        <taxon>Desulfovibrionaceae</taxon>
        <taxon>Maridesulfovibrio</taxon>
    </lineage>
</organism>
<name>RL35_MARSD</name>
<sequence length="65" mass="7329">MPKMKTRRGAAKRFAKTGSGKFKRRKQGLRHILTKKTAKRKSRLGQSATVDSANIGQVKRMLPYA</sequence>
<comment type="similarity">
    <text evidence="1">Belongs to the bacterial ribosomal protein bL35 family.</text>
</comment>
<protein>
    <recommendedName>
        <fullName evidence="1">Large ribosomal subunit protein bL35</fullName>
    </recommendedName>
    <alternativeName>
        <fullName evidence="3">50S ribosomal protein L35</fullName>
    </alternativeName>
</protein>
<dbReference type="EMBL" id="CP001649">
    <property type="protein sequence ID" value="ACS79409.1"/>
    <property type="molecule type" value="Genomic_DNA"/>
</dbReference>
<dbReference type="RefSeq" id="WP_015851227.1">
    <property type="nucleotide sequence ID" value="NC_012881.1"/>
</dbReference>
<dbReference type="SMR" id="C6BRG9"/>
<dbReference type="STRING" id="526222.Desal_1347"/>
<dbReference type="KEGG" id="dsa:Desal_1347"/>
<dbReference type="eggNOG" id="COG0291">
    <property type="taxonomic scope" value="Bacteria"/>
</dbReference>
<dbReference type="HOGENOM" id="CLU_169643_1_1_7"/>
<dbReference type="OrthoDB" id="9804851at2"/>
<dbReference type="Proteomes" id="UP000002601">
    <property type="component" value="Chromosome"/>
</dbReference>
<dbReference type="GO" id="GO:0022625">
    <property type="term" value="C:cytosolic large ribosomal subunit"/>
    <property type="evidence" value="ECO:0007669"/>
    <property type="project" value="TreeGrafter"/>
</dbReference>
<dbReference type="GO" id="GO:0003735">
    <property type="term" value="F:structural constituent of ribosome"/>
    <property type="evidence" value="ECO:0007669"/>
    <property type="project" value="InterPro"/>
</dbReference>
<dbReference type="GO" id="GO:0006412">
    <property type="term" value="P:translation"/>
    <property type="evidence" value="ECO:0007669"/>
    <property type="project" value="UniProtKB-UniRule"/>
</dbReference>
<dbReference type="FunFam" id="4.10.410.60:FF:000001">
    <property type="entry name" value="50S ribosomal protein L35"/>
    <property type="match status" value="1"/>
</dbReference>
<dbReference type="Gene3D" id="4.10.410.60">
    <property type="match status" value="1"/>
</dbReference>
<dbReference type="HAMAP" id="MF_00514">
    <property type="entry name" value="Ribosomal_bL35"/>
    <property type="match status" value="1"/>
</dbReference>
<dbReference type="InterPro" id="IPR001706">
    <property type="entry name" value="Ribosomal_bL35"/>
</dbReference>
<dbReference type="InterPro" id="IPR021137">
    <property type="entry name" value="Ribosomal_bL35-like"/>
</dbReference>
<dbReference type="InterPro" id="IPR018265">
    <property type="entry name" value="Ribosomal_bL35_CS"/>
</dbReference>
<dbReference type="InterPro" id="IPR037229">
    <property type="entry name" value="Ribosomal_bL35_sf"/>
</dbReference>
<dbReference type="NCBIfam" id="TIGR00001">
    <property type="entry name" value="rpmI_bact"/>
    <property type="match status" value="1"/>
</dbReference>
<dbReference type="PANTHER" id="PTHR33343">
    <property type="entry name" value="54S RIBOSOMAL PROTEIN BL35M"/>
    <property type="match status" value="1"/>
</dbReference>
<dbReference type="PANTHER" id="PTHR33343:SF1">
    <property type="entry name" value="LARGE RIBOSOMAL SUBUNIT PROTEIN BL35M"/>
    <property type="match status" value="1"/>
</dbReference>
<dbReference type="Pfam" id="PF01632">
    <property type="entry name" value="Ribosomal_L35p"/>
    <property type="match status" value="1"/>
</dbReference>
<dbReference type="PRINTS" id="PR00064">
    <property type="entry name" value="RIBOSOMALL35"/>
</dbReference>
<dbReference type="SUPFAM" id="SSF143034">
    <property type="entry name" value="L35p-like"/>
    <property type="match status" value="1"/>
</dbReference>
<dbReference type="PROSITE" id="PS00936">
    <property type="entry name" value="RIBOSOMAL_L35"/>
    <property type="match status" value="1"/>
</dbReference>
<gene>
    <name evidence="1" type="primary">rpmI</name>
    <name type="ordered locus">Desal_1347</name>
</gene>
<proteinExistence type="inferred from homology"/>
<reference key="1">
    <citation type="submission" date="2009-06" db="EMBL/GenBank/DDBJ databases">
        <title>Complete sequence of Desulfovibrio salexigens DSM 2638.</title>
        <authorList>
            <consortium name="US DOE Joint Genome Institute"/>
            <person name="Lucas S."/>
            <person name="Copeland A."/>
            <person name="Lapidus A."/>
            <person name="Glavina del Rio T."/>
            <person name="Tice H."/>
            <person name="Bruce D."/>
            <person name="Goodwin L."/>
            <person name="Pitluck S."/>
            <person name="Munk A.C."/>
            <person name="Brettin T."/>
            <person name="Detter J.C."/>
            <person name="Han C."/>
            <person name="Tapia R."/>
            <person name="Larimer F."/>
            <person name="Land M."/>
            <person name="Hauser L."/>
            <person name="Kyrpides N."/>
            <person name="Anderson I."/>
            <person name="Wall J.D."/>
            <person name="Arkin A.P."/>
            <person name="Dehal P."/>
            <person name="Chivian D."/>
            <person name="Giles B."/>
            <person name="Hazen T.C."/>
        </authorList>
    </citation>
    <scope>NUCLEOTIDE SEQUENCE [LARGE SCALE GENOMIC DNA]</scope>
    <source>
        <strain>ATCC 14822 / DSM 2638 / NCIMB 8403 / VKM B-1763</strain>
    </source>
</reference>